<reference key="1">
    <citation type="journal article" date="2009" name="PLoS Genet.">
        <title>Organised genome dynamics in the Escherichia coli species results in highly diverse adaptive paths.</title>
        <authorList>
            <person name="Touchon M."/>
            <person name="Hoede C."/>
            <person name="Tenaillon O."/>
            <person name="Barbe V."/>
            <person name="Baeriswyl S."/>
            <person name="Bidet P."/>
            <person name="Bingen E."/>
            <person name="Bonacorsi S."/>
            <person name="Bouchier C."/>
            <person name="Bouvet O."/>
            <person name="Calteau A."/>
            <person name="Chiapello H."/>
            <person name="Clermont O."/>
            <person name="Cruveiller S."/>
            <person name="Danchin A."/>
            <person name="Diard M."/>
            <person name="Dossat C."/>
            <person name="Karoui M.E."/>
            <person name="Frapy E."/>
            <person name="Garry L."/>
            <person name="Ghigo J.M."/>
            <person name="Gilles A.M."/>
            <person name="Johnson J."/>
            <person name="Le Bouguenec C."/>
            <person name="Lescat M."/>
            <person name="Mangenot S."/>
            <person name="Martinez-Jehanne V."/>
            <person name="Matic I."/>
            <person name="Nassif X."/>
            <person name="Oztas S."/>
            <person name="Petit M.A."/>
            <person name="Pichon C."/>
            <person name="Rouy Z."/>
            <person name="Ruf C.S."/>
            <person name="Schneider D."/>
            <person name="Tourret J."/>
            <person name="Vacherie B."/>
            <person name="Vallenet D."/>
            <person name="Medigue C."/>
            <person name="Rocha E.P.C."/>
            <person name="Denamur E."/>
        </authorList>
    </citation>
    <scope>NUCLEOTIDE SEQUENCE [LARGE SCALE GENOMIC DNA]</scope>
    <source>
        <strain>55989 / EAEC</strain>
    </source>
</reference>
<evidence type="ECO:0000255" key="1">
    <source>
        <dbReference type="HAMAP-Rule" id="MF_00275"/>
    </source>
</evidence>
<dbReference type="EMBL" id="CU928145">
    <property type="protein sequence ID" value="CAU96552.1"/>
    <property type="molecule type" value="Genomic_DNA"/>
</dbReference>
<dbReference type="RefSeq" id="WP_000741112.1">
    <property type="nucleotide sequence ID" value="NC_011748.1"/>
</dbReference>
<dbReference type="SMR" id="B7LAA5"/>
<dbReference type="GeneID" id="75204949"/>
<dbReference type="KEGG" id="eck:EC55989_0682"/>
<dbReference type="HOGENOM" id="CLU_018614_3_0_6"/>
<dbReference type="Proteomes" id="UP000000746">
    <property type="component" value="Chromosome"/>
</dbReference>
<dbReference type="GO" id="GO:0005886">
    <property type="term" value="C:plasma membrane"/>
    <property type="evidence" value="ECO:0007669"/>
    <property type="project" value="UniProtKB-SubCell"/>
</dbReference>
<dbReference type="GO" id="GO:0008556">
    <property type="term" value="F:P-type potassium transmembrane transporter activity"/>
    <property type="evidence" value="ECO:0007669"/>
    <property type="project" value="InterPro"/>
</dbReference>
<dbReference type="GO" id="GO:0030955">
    <property type="term" value="F:potassium ion binding"/>
    <property type="evidence" value="ECO:0007669"/>
    <property type="project" value="UniProtKB-UniRule"/>
</dbReference>
<dbReference type="HAMAP" id="MF_00275">
    <property type="entry name" value="KdpA"/>
    <property type="match status" value="1"/>
</dbReference>
<dbReference type="InterPro" id="IPR004623">
    <property type="entry name" value="KdpA"/>
</dbReference>
<dbReference type="NCBIfam" id="TIGR00680">
    <property type="entry name" value="kdpA"/>
    <property type="match status" value="1"/>
</dbReference>
<dbReference type="PANTHER" id="PTHR30607">
    <property type="entry name" value="POTASSIUM-TRANSPORTING ATPASE A CHAIN"/>
    <property type="match status" value="1"/>
</dbReference>
<dbReference type="PANTHER" id="PTHR30607:SF2">
    <property type="entry name" value="POTASSIUM-TRANSPORTING ATPASE POTASSIUM-BINDING SUBUNIT"/>
    <property type="match status" value="1"/>
</dbReference>
<dbReference type="Pfam" id="PF03814">
    <property type="entry name" value="KdpA"/>
    <property type="match status" value="1"/>
</dbReference>
<dbReference type="PIRSF" id="PIRSF001294">
    <property type="entry name" value="K_ATPaseA"/>
    <property type="match status" value="1"/>
</dbReference>
<sequence>MAAQGFLLIATFLLVLMVLARPLGSGLARLINDIPLPGTAGVERILFRLPGVSDHEMNWKQYLCAILGLNMLGLAVLFFMLLGQHYLPLNPQQLPGLSWDLALNTAVSFVTNTNWQSYSGETTLSYFSQMAGLTVQNFLSAASGIAVIFALIRAFTRQSMSTLGNAWVDLLRITLWVLVPVALLIALFFIQQGALQNFQPYQAVNTVEGAQQLLPMGPVASQEAIKMLGTNGGGFFNANSSHPFENPTALTNFVQMLAIFLIPTALCFAFGEVTGDRRQGRMLLWAMSVIFVICVGVVMWAEVQGNPHLLALGADSSINMEGKESRFGVLVSSLFAVVTTAASCGAVIAMHDSFTALGGMVPMWLMQIGEVVFGGVGSGLYGMMLFVLLAVFIAGLMIGRTPEYLGKKIDVREMKLTALAILVTPTLVLMGAALAMMTDAGRSAMLNPGPHGFSEVLYAVSSAANNNGSAFAGLSANSPFWNCLLAFCMFVGRFGVIIPVMAIAGSLVSKKSQPASSGTLPTHGPLFVGLLIGTVLLVGALTFIPALALGPVAEYLS</sequence>
<gene>
    <name evidence="1" type="primary">kdpA</name>
    <name type="ordered locus">EC55989_0682</name>
</gene>
<organism>
    <name type="scientific">Escherichia coli (strain 55989 / EAEC)</name>
    <dbReference type="NCBI Taxonomy" id="585055"/>
    <lineage>
        <taxon>Bacteria</taxon>
        <taxon>Pseudomonadati</taxon>
        <taxon>Pseudomonadota</taxon>
        <taxon>Gammaproteobacteria</taxon>
        <taxon>Enterobacterales</taxon>
        <taxon>Enterobacteriaceae</taxon>
        <taxon>Escherichia</taxon>
    </lineage>
</organism>
<name>KDPA_ECO55</name>
<feature type="chain" id="PRO_1000190735" description="Potassium-transporting ATPase potassium-binding subunit">
    <location>
        <begin position="1"/>
        <end position="557"/>
    </location>
</feature>
<feature type="transmembrane region" description="Helical" evidence="1">
    <location>
        <begin position="5"/>
        <end position="25"/>
    </location>
</feature>
<feature type="transmembrane region" description="Helical" evidence="1">
    <location>
        <begin position="63"/>
        <end position="83"/>
    </location>
</feature>
<feature type="transmembrane region" description="Helical" evidence="1">
    <location>
        <begin position="132"/>
        <end position="152"/>
    </location>
</feature>
<feature type="transmembrane region" description="Helical" evidence="1">
    <location>
        <begin position="170"/>
        <end position="190"/>
    </location>
</feature>
<feature type="transmembrane region" description="Helical" evidence="1">
    <location>
        <begin position="253"/>
        <end position="273"/>
    </location>
</feature>
<feature type="transmembrane region" description="Helical" evidence="1">
    <location>
        <begin position="283"/>
        <end position="303"/>
    </location>
</feature>
<feature type="transmembrane region" description="Helical" evidence="1">
    <location>
        <begin position="329"/>
        <end position="349"/>
    </location>
</feature>
<feature type="transmembrane region" description="Helical" evidence="1">
    <location>
        <begin position="356"/>
        <end position="376"/>
    </location>
</feature>
<feature type="transmembrane region" description="Helical" evidence="1">
    <location>
        <begin position="379"/>
        <end position="399"/>
    </location>
</feature>
<feature type="transmembrane region" description="Helical" evidence="1">
    <location>
        <begin position="416"/>
        <end position="436"/>
    </location>
</feature>
<feature type="transmembrane region" description="Helical" evidence="1">
    <location>
        <begin position="484"/>
        <end position="504"/>
    </location>
</feature>
<feature type="transmembrane region" description="Helical" evidence="1">
    <location>
        <begin position="526"/>
        <end position="546"/>
    </location>
</feature>
<keyword id="KW-0997">Cell inner membrane</keyword>
<keyword id="KW-1003">Cell membrane</keyword>
<keyword id="KW-0406">Ion transport</keyword>
<keyword id="KW-0472">Membrane</keyword>
<keyword id="KW-0630">Potassium</keyword>
<keyword id="KW-0633">Potassium transport</keyword>
<keyword id="KW-1185">Reference proteome</keyword>
<keyword id="KW-0812">Transmembrane</keyword>
<keyword id="KW-1133">Transmembrane helix</keyword>
<keyword id="KW-0813">Transport</keyword>
<accession>B7LAA5</accession>
<proteinExistence type="inferred from homology"/>
<protein>
    <recommendedName>
        <fullName evidence="1">Potassium-transporting ATPase potassium-binding subunit</fullName>
    </recommendedName>
    <alternativeName>
        <fullName evidence="1">ATP phosphohydrolase [potassium-transporting] A chain</fullName>
    </alternativeName>
    <alternativeName>
        <fullName evidence="1">Potassium-binding and translocating subunit A</fullName>
    </alternativeName>
    <alternativeName>
        <fullName evidence="1">Potassium-translocating ATPase A chain</fullName>
    </alternativeName>
</protein>
<comment type="function">
    <text evidence="1">Part of the high-affinity ATP-driven potassium transport (or Kdp) system, which catalyzes the hydrolysis of ATP coupled with the electrogenic transport of potassium into the cytoplasm. This subunit binds the periplasmic potassium ions and delivers the ions to the membrane domain of KdpB through an intramembrane tunnel.</text>
</comment>
<comment type="subunit">
    <text evidence="1">The system is composed of three essential subunits: KdpA, KdpB and KdpC.</text>
</comment>
<comment type="subcellular location">
    <subcellularLocation>
        <location evidence="1">Cell inner membrane</location>
        <topology evidence="1">Multi-pass membrane protein</topology>
    </subcellularLocation>
</comment>
<comment type="similarity">
    <text evidence="1">Belongs to the KdpA family.</text>
</comment>